<dbReference type="EMBL" id="CP000148">
    <property type="protein sequence ID" value="ABB30891.1"/>
    <property type="molecule type" value="Genomic_DNA"/>
</dbReference>
<dbReference type="SMR" id="Q39XY3"/>
<dbReference type="STRING" id="269799.Gmet_0649"/>
<dbReference type="KEGG" id="gme:Gmet_0649"/>
<dbReference type="eggNOG" id="COG0257">
    <property type="taxonomic scope" value="Bacteria"/>
</dbReference>
<dbReference type="HOGENOM" id="CLU_135723_6_2_7"/>
<dbReference type="Proteomes" id="UP000007073">
    <property type="component" value="Chromosome"/>
</dbReference>
<dbReference type="GO" id="GO:0005737">
    <property type="term" value="C:cytoplasm"/>
    <property type="evidence" value="ECO:0007669"/>
    <property type="project" value="UniProtKB-ARBA"/>
</dbReference>
<dbReference type="GO" id="GO:1990904">
    <property type="term" value="C:ribonucleoprotein complex"/>
    <property type="evidence" value="ECO:0007669"/>
    <property type="project" value="UniProtKB-KW"/>
</dbReference>
<dbReference type="GO" id="GO:0005840">
    <property type="term" value="C:ribosome"/>
    <property type="evidence" value="ECO:0007669"/>
    <property type="project" value="UniProtKB-KW"/>
</dbReference>
<dbReference type="GO" id="GO:0003735">
    <property type="term" value="F:structural constituent of ribosome"/>
    <property type="evidence" value="ECO:0007669"/>
    <property type="project" value="InterPro"/>
</dbReference>
<dbReference type="GO" id="GO:0006412">
    <property type="term" value="P:translation"/>
    <property type="evidence" value="ECO:0007669"/>
    <property type="project" value="UniProtKB-UniRule"/>
</dbReference>
<dbReference type="HAMAP" id="MF_00251">
    <property type="entry name" value="Ribosomal_bL36"/>
    <property type="match status" value="1"/>
</dbReference>
<dbReference type="InterPro" id="IPR000473">
    <property type="entry name" value="Ribosomal_bL36"/>
</dbReference>
<dbReference type="InterPro" id="IPR035977">
    <property type="entry name" value="Ribosomal_bL36_sp"/>
</dbReference>
<dbReference type="NCBIfam" id="TIGR01022">
    <property type="entry name" value="rpmJ_bact"/>
    <property type="match status" value="1"/>
</dbReference>
<dbReference type="PANTHER" id="PTHR42888">
    <property type="entry name" value="50S RIBOSOMAL PROTEIN L36, CHLOROPLASTIC"/>
    <property type="match status" value="1"/>
</dbReference>
<dbReference type="PANTHER" id="PTHR42888:SF1">
    <property type="entry name" value="LARGE RIBOSOMAL SUBUNIT PROTEIN BL36C"/>
    <property type="match status" value="1"/>
</dbReference>
<dbReference type="Pfam" id="PF00444">
    <property type="entry name" value="Ribosomal_L36"/>
    <property type="match status" value="1"/>
</dbReference>
<dbReference type="SUPFAM" id="SSF57840">
    <property type="entry name" value="Ribosomal protein L36"/>
    <property type="match status" value="1"/>
</dbReference>
<dbReference type="PROSITE" id="PS00828">
    <property type="entry name" value="RIBOSOMAL_L36"/>
    <property type="match status" value="1"/>
</dbReference>
<comment type="similarity">
    <text evidence="1">Belongs to the bacterial ribosomal protein bL36 family.</text>
</comment>
<keyword id="KW-1185">Reference proteome</keyword>
<keyword id="KW-0687">Ribonucleoprotein</keyword>
<keyword id="KW-0689">Ribosomal protein</keyword>
<feature type="chain" id="PRO_0000302211" description="Large ribosomal subunit protein bL36">
    <location>
        <begin position="1"/>
        <end position="37"/>
    </location>
</feature>
<organism>
    <name type="scientific">Geobacter metallireducens (strain ATCC 53774 / DSM 7210 / GS-15)</name>
    <dbReference type="NCBI Taxonomy" id="269799"/>
    <lineage>
        <taxon>Bacteria</taxon>
        <taxon>Pseudomonadati</taxon>
        <taxon>Thermodesulfobacteriota</taxon>
        <taxon>Desulfuromonadia</taxon>
        <taxon>Geobacterales</taxon>
        <taxon>Geobacteraceae</taxon>
        <taxon>Geobacter</taxon>
    </lineage>
</organism>
<accession>Q39XY3</accession>
<evidence type="ECO:0000255" key="1">
    <source>
        <dbReference type="HAMAP-Rule" id="MF_00251"/>
    </source>
</evidence>
<evidence type="ECO:0000305" key="2"/>
<proteinExistence type="inferred from homology"/>
<gene>
    <name evidence="1" type="primary">rpmJ</name>
    <name type="ordered locus">Gmet_0649</name>
</gene>
<name>RL36_GEOMG</name>
<reference key="1">
    <citation type="journal article" date="2009" name="BMC Microbiol.">
        <title>The genome sequence of Geobacter metallireducens: features of metabolism, physiology and regulation common and dissimilar to Geobacter sulfurreducens.</title>
        <authorList>
            <person name="Aklujkar M."/>
            <person name="Krushkal J."/>
            <person name="DiBartolo G."/>
            <person name="Lapidus A."/>
            <person name="Land M.L."/>
            <person name="Lovley D.R."/>
        </authorList>
    </citation>
    <scope>NUCLEOTIDE SEQUENCE [LARGE SCALE GENOMIC DNA]</scope>
    <source>
        <strain>ATCC 53774 / DSM 7210 / GS-15</strain>
    </source>
</reference>
<sequence length="37" mass="4280">MKVRASVKKICDKCKIIKRKGIVRVICETPKHTQRQG</sequence>
<protein>
    <recommendedName>
        <fullName evidence="1">Large ribosomal subunit protein bL36</fullName>
    </recommendedName>
    <alternativeName>
        <fullName evidence="2">50S ribosomal protein L36</fullName>
    </alternativeName>
</protein>